<accession>Q6Q2B2</accession>
<reference key="1">
    <citation type="journal article" date="2007" name="Comp. Biochem. Physiol.">
        <title>Characterization of two paralogous muscleblind-like genes from the tiger pufferfish (Takifugu rubripes).</title>
        <authorList>
            <person name="Fernandes J.M.O."/>
            <person name="Kinghorn J.R."/>
            <person name="Johnston I.A."/>
        </authorList>
    </citation>
    <scope>NUCLEOTIDE SEQUENCE [MRNA]</scope>
    <scope>TISSUE SPECIFICITY</scope>
    <source>
        <tissue>Myotomal muscle</tissue>
    </source>
</reference>
<name>MBN2A_TAKRU</name>
<protein>
    <recommendedName>
        <fullName>Muscleblind-like protein 2a</fullName>
    </recommendedName>
    <alternativeName>
        <fullName>Tmbnl2a</fullName>
    </alternativeName>
</protein>
<keyword id="KW-0963">Cytoplasm</keyword>
<keyword id="KW-0479">Metal-binding</keyword>
<keyword id="KW-0507">mRNA processing</keyword>
<keyword id="KW-0508">mRNA splicing</keyword>
<keyword id="KW-0539">Nucleus</keyword>
<keyword id="KW-1185">Reference proteome</keyword>
<keyword id="KW-0677">Repeat</keyword>
<keyword id="KW-0694">RNA-binding</keyword>
<keyword id="KW-0862">Zinc</keyword>
<keyword id="KW-0863">Zinc-finger</keyword>
<comment type="function">
    <text evidence="1">Involved in pre-mRNA alternative splicing regulation. RNA-binding protein that binds to 5'ACACCC-3' core sequence (By similarity).</text>
</comment>
<comment type="subcellular location">
    <subcellularLocation>
        <location evidence="1">Nucleus</location>
    </subcellularLocation>
    <subcellularLocation>
        <location evidence="1">Cytoplasm</location>
    </subcellularLocation>
</comment>
<comment type="tissue specificity">
    <text evidence="3">Expressed in fast and slow myotomal muscle, heart, liver, skin, brain and testis.</text>
</comment>
<comment type="similarity">
    <text evidence="4">Belongs to the muscleblind family.</text>
</comment>
<dbReference type="EMBL" id="AY566276">
    <property type="protein sequence ID" value="AAS84613.1"/>
    <property type="molecule type" value="mRNA"/>
</dbReference>
<dbReference type="RefSeq" id="NP_001027847.1">
    <property type="nucleotide sequence ID" value="NM_001032675.1"/>
</dbReference>
<dbReference type="RefSeq" id="XP_011604364.1">
    <property type="nucleotide sequence ID" value="XM_011606062.1"/>
</dbReference>
<dbReference type="SMR" id="Q6Q2B2"/>
<dbReference type="STRING" id="31033.ENSTRUP00000053454"/>
<dbReference type="GeneID" id="446045"/>
<dbReference type="KEGG" id="tru:446045"/>
<dbReference type="CTD" id="446045"/>
<dbReference type="eggNOG" id="KOG2494">
    <property type="taxonomic scope" value="Eukaryota"/>
</dbReference>
<dbReference type="InParanoid" id="Q6Q2B2"/>
<dbReference type="OrthoDB" id="6285980at2759"/>
<dbReference type="Proteomes" id="UP000005226">
    <property type="component" value="Unplaced"/>
</dbReference>
<dbReference type="GO" id="GO:0005737">
    <property type="term" value="C:cytoplasm"/>
    <property type="evidence" value="ECO:0007669"/>
    <property type="project" value="UniProtKB-SubCell"/>
</dbReference>
<dbReference type="GO" id="GO:0005654">
    <property type="term" value="C:nucleoplasm"/>
    <property type="evidence" value="ECO:0007669"/>
    <property type="project" value="TreeGrafter"/>
</dbReference>
<dbReference type="GO" id="GO:0003723">
    <property type="term" value="F:RNA binding"/>
    <property type="evidence" value="ECO:0007669"/>
    <property type="project" value="UniProtKB-KW"/>
</dbReference>
<dbReference type="GO" id="GO:0008270">
    <property type="term" value="F:zinc ion binding"/>
    <property type="evidence" value="ECO:0007669"/>
    <property type="project" value="UniProtKB-KW"/>
</dbReference>
<dbReference type="GO" id="GO:0006397">
    <property type="term" value="P:mRNA processing"/>
    <property type="evidence" value="ECO:0007669"/>
    <property type="project" value="UniProtKB-KW"/>
</dbReference>
<dbReference type="GO" id="GO:0043484">
    <property type="term" value="P:regulation of RNA splicing"/>
    <property type="evidence" value="ECO:0007669"/>
    <property type="project" value="TreeGrafter"/>
</dbReference>
<dbReference type="GO" id="GO:0008380">
    <property type="term" value="P:RNA splicing"/>
    <property type="evidence" value="ECO:0007669"/>
    <property type="project" value="UniProtKB-KW"/>
</dbReference>
<dbReference type="FunFam" id="3.30.1370.210:FF:000004">
    <property type="entry name" value="Muscleblind like splicing regulator 1"/>
    <property type="match status" value="1"/>
</dbReference>
<dbReference type="FunFam" id="3.30.1370.210:FF:000002">
    <property type="entry name" value="Muscleblind-like 1 isoform 2"/>
    <property type="match status" value="1"/>
</dbReference>
<dbReference type="Gene3D" id="3.30.1370.210">
    <property type="match status" value="2"/>
</dbReference>
<dbReference type="InterPro" id="IPR054429">
    <property type="entry name" value="Znf-CCCH_Muscleblind-like"/>
</dbReference>
<dbReference type="InterPro" id="IPR000571">
    <property type="entry name" value="Znf_CCCH"/>
</dbReference>
<dbReference type="PANTHER" id="PTHR12675">
    <property type="entry name" value="MUSCLEBLIND-LIKE PROTEIN"/>
    <property type="match status" value="1"/>
</dbReference>
<dbReference type="PANTHER" id="PTHR12675:SF4">
    <property type="entry name" value="MUSCLEBLIND-LIKE PROTEIN 2"/>
    <property type="match status" value="1"/>
</dbReference>
<dbReference type="Pfam" id="PF00642">
    <property type="entry name" value="zf-CCCH"/>
    <property type="match status" value="2"/>
</dbReference>
<dbReference type="Pfam" id="PF22628">
    <property type="entry name" value="zf-CCCH_10"/>
    <property type="match status" value="2"/>
</dbReference>
<dbReference type="SMART" id="SM00356">
    <property type="entry name" value="ZnF_C3H1"/>
    <property type="match status" value="4"/>
</dbReference>
<dbReference type="PROSITE" id="PS50103">
    <property type="entry name" value="ZF_C3H1"/>
    <property type="match status" value="4"/>
</dbReference>
<organism>
    <name type="scientific">Takifugu rubripes</name>
    <name type="common">Japanese pufferfish</name>
    <name type="synonym">Fugu rubripes</name>
    <dbReference type="NCBI Taxonomy" id="31033"/>
    <lineage>
        <taxon>Eukaryota</taxon>
        <taxon>Metazoa</taxon>
        <taxon>Chordata</taxon>
        <taxon>Craniata</taxon>
        <taxon>Vertebrata</taxon>
        <taxon>Euteleostomi</taxon>
        <taxon>Actinopterygii</taxon>
        <taxon>Neopterygii</taxon>
        <taxon>Teleostei</taxon>
        <taxon>Neoteleostei</taxon>
        <taxon>Acanthomorphata</taxon>
        <taxon>Eupercaria</taxon>
        <taxon>Tetraodontiformes</taxon>
        <taxon>Tetradontoidea</taxon>
        <taxon>Tetraodontidae</taxon>
        <taxon>Takifugu</taxon>
    </lineage>
</organism>
<evidence type="ECO:0000250" key="1"/>
<evidence type="ECO:0000255" key="2">
    <source>
        <dbReference type="PROSITE-ProRule" id="PRU00723"/>
    </source>
</evidence>
<evidence type="ECO:0000269" key="3">
    <source>
    </source>
</evidence>
<evidence type="ECO:0000305" key="4"/>
<sequence length="351" mass="38204">MALNIASIRDTKWLTLEVCRQFQRGTCSRSDEECKFAHPPKSCQVENGRVIACFDSLKGRCTRENCKYLHPPAHLKTQLEINGRNNLIQQKTAAAMLAQQMQFMIPSTTMQHVQTFPVNQGLGSSAGLSYTPYLTPMSHSMGLVPTDILPSTPVIVPGSPPVSVTAGSSSNQKLLRTDKLEVCREFQRGNCARGETDCRFAHPSDSPMIDTSDNTVTVCMDYIKSRCSREKCKYFHPPAHLQAKVKAAQHQANQTAVAAQAAATAAAMTQSTAKAMKRPLEATVDLAFPHSGLQPLPKRPALEKSNGSSSLFNPSVLHYQQALANAQLQQPAFFPTGSVLCMTPASSLGRS</sequence>
<feature type="chain" id="PRO_0000284140" description="Muscleblind-like protein 2a">
    <location>
        <begin position="1"/>
        <end position="351"/>
    </location>
</feature>
<feature type="zinc finger region" description="C3H1-type 1" evidence="2">
    <location>
        <begin position="13"/>
        <end position="41"/>
    </location>
</feature>
<feature type="zinc finger region" description="C3H1-type 2" evidence="2">
    <location>
        <begin position="47"/>
        <end position="73"/>
    </location>
</feature>
<feature type="zinc finger region" description="C3H1-type 3" evidence="2">
    <location>
        <begin position="177"/>
        <end position="205"/>
    </location>
</feature>
<feature type="zinc finger region" description="C3H1-type 4" evidence="2">
    <location>
        <begin position="213"/>
        <end position="239"/>
    </location>
</feature>
<proteinExistence type="evidence at transcript level"/>
<gene>
    <name type="primary">mbnl2a</name>
</gene>